<keyword id="KW-0378">Hydrolase</keyword>
<keyword id="KW-0645">Protease</keyword>
<keyword id="KW-1185">Reference proteome</keyword>
<keyword id="KW-0720">Serine protease</keyword>
<dbReference type="EC" id="3.4.21.-"/>
<dbReference type="EMBL" id="BA000022">
    <property type="protein sequence ID" value="BAA10208.1"/>
    <property type="molecule type" value="Genomic_DNA"/>
</dbReference>
<dbReference type="PIR" id="S76356">
    <property type="entry name" value="S76356"/>
</dbReference>
<dbReference type="SMR" id="Q55682"/>
<dbReference type="FunCoup" id="Q55682">
    <property type="interactions" value="14"/>
</dbReference>
<dbReference type="STRING" id="1148.gene:10499706"/>
<dbReference type="PaxDb" id="1148-1001581"/>
<dbReference type="EnsemblBacteria" id="BAA10208">
    <property type="protein sequence ID" value="BAA10208"/>
    <property type="gene ID" value="BAA10208"/>
</dbReference>
<dbReference type="KEGG" id="syn:slr0021"/>
<dbReference type="eggNOG" id="COG0616">
    <property type="taxonomic scope" value="Bacteria"/>
</dbReference>
<dbReference type="InParanoid" id="Q55682"/>
<dbReference type="PhylomeDB" id="Q55682"/>
<dbReference type="Proteomes" id="UP000001425">
    <property type="component" value="Chromosome"/>
</dbReference>
<dbReference type="GO" id="GO:0008236">
    <property type="term" value="F:serine-type peptidase activity"/>
    <property type="evidence" value="ECO:0007669"/>
    <property type="project" value="UniProtKB-KW"/>
</dbReference>
<dbReference type="GO" id="GO:0006508">
    <property type="term" value="P:proteolysis"/>
    <property type="evidence" value="ECO:0007669"/>
    <property type="project" value="UniProtKB-KW"/>
</dbReference>
<dbReference type="CDD" id="cd07023">
    <property type="entry name" value="S49_Sppa_N_C"/>
    <property type="match status" value="1"/>
</dbReference>
<dbReference type="Gene3D" id="3.90.226.10">
    <property type="entry name" value="2-enoyl-CoA Hydratase, Chain A, domain 1"/>
    <property type="match status" value="2"/>
</dbReference>
<dbReference type="InterPro" id="IPR029045">
    <property type="entry name" value="ClpP/crotonase-like_dom_sf"/>
</dbReference>
<dbReference type="InterPro" id="IPR004635">
    <property type="entry name" value="Pept_S49_SppA"/>
</dbReference>
<dbReference type="InterPro" id="IPR002142">
    <property type="entry name" value="Peptidase_S49"/>
</dbReference>
<dbReference type="InterPro" id="IPR047272">
    <property type="entry name" value="S49_SppA_C"/>
</dbReference>
<dbReference type="NCBIfam" id="TIGR00706">
    <property type="entry name" value="SppA_dom"/>
    <property type="match status" value="1"/>
</dbReference>
<dbReference type="PANTHER" id="PTHR42987">
    <property type="entry name" value="PEPTIDASE S49"/>
    <property type="match status" value="1"/>
</dbReference>
<dbReference type="PANTHER" id="PTHR42987:SF7">
    <property type="entry name" value="SIGNAL PEPTIDE PEPTIDASE SPPA-RELATED"/>
    <property type="match status" value="1"/>
</dbReference>
<dbReference type="Pfam" id="PF01343">
    <property type="entry name" value="Peptidase_S49"/>
    <property type="match status" value="1"/>
</dbReference>
<dbReference type="SUPFAM" id="SSF52096">
    <property type="entry name" value="ClpP/crotonase"/>
    <property type="match status" value="1"/>
</dbReference>
<evidence type="ECO:0000250" key="1"/>
<evidence type="ECO:0000305" key="2"/>
<gene>
    <name type="ordered locus">slr0021</name>
</gene>
<name>Y021_SYNY3</name>
<accession>Q55682</accession>
<organism>
    <name type="scientific">Synechocystis sp. (strain ATCC 27184 / PCC 6803 / Kazusa)</name>
    <dbReference type="NCBI Taxonomy" id="1111708"/>
    <lineage>
        <taxon>Bacteria</taxon>
        <taxon>Bacillati</taxon>
        <taxon>Cyanobacteriota</taxon>
        <taxon>Cyanophyceae</taxon>
        <taxon>Synechococcales</taxon>
        <taxon>Merismopediaceae</taxon>
        <taxon>Synechocystis</taxon>
    </lineage>
</organism>
<proteinExistence type="inferred from homology"/>
<feature type="chain" id="PRO_0000171455" description="Putative protease slr0021">
    <location>
        <begin position="1"/>
        <end position="277"/>
    </location>
</feature>
<feature type="active site" description="Nucleophile" evidence="1">
    <location>
        <position position="85"/>
    </location>
</feature>
<feature type="active site" description="Proton donor/acceptor" evidence="1">
    <location>
        <position position="137"/>
    </location>
</feature>
<sequence length="277" mass="30274">MIWPFKTSTRKKIARIEVTGAIASGTRKAVLKALKTVEEKKYPALLVRIDSPGGTVVDSQEIYTKLKQLSEKIKVVASFGNISASGGVYIAMGCPHIMANSGTITGSIGVILRGNNLERLLEKVGVSFKVIKSGPYKDILSFDRELLPEEQSILQALIDDSYGQFVSTVAAGRNLAVEKVKEFADGRIFTGQQALELGLVDRLGTEEDARQWAATLAGLDPDKVELDTIEDPKPLVRRLTGGDSQLQTMADNLGLTESLKWCEFELSTSGQPLWLYR</sequence>
<protein>
    <recommendedName>
        <fullName>Putative protease slr0021</fullName>
        <ecNumber>3.4.21.-</ecNumber>
    </recommendedName>
</protein>
<comment type="similarity">
    <text evidence="2">Belongs to the peptidase S49 family.</text>
</comment>
<reference key="1">
    <citation type="journal article" date="1995" name="DNA Res.">
        <title>Sequence analysis of the genome of the unicellular cyanobacterium Synechocystis sp. strain PCC6803. I. Sequence features in the 1 Mb region from map positions 64% to 92% of the genome.</title>
        <authorList>
            <person name="Kaneko T."/>
            <person name="Tanaka A."/>
            <person name="Sato S."/>
            <person name="Kotani H."/>
            <person name="Sazuka T."/>
            <person name="Miyajima N."/>
            <person name="Sugiura M."/>
            <person name="Tabata S."/>
        </authorList>
    </citation>
    <scope>NUCLEOTIDE SEQUENCE [LARGE SCALE GENOMIC DNA]</scope>
    <source>
        <strain>ATCC 27184 / PCC 6803 / N-1</strain>
    </source>
</reference>
<reference key="2">
    <citation type="journal article" date="1996" name="DNA Res.">
        <title>Sequence analysis of the genome of the unicellular cyanobacterium Synechocystis sp. strain PCC6803. II. Sequence determination of the entire genome and assignment of potential protein-coding regions.</title>
        <authorList>
            <person name="Kaneko T."/>
            <person name="Sato S."/>
            <person name="Kotani H."/>
            <person name="Tanaka A."/>
            <person name="Asamizu E."/>
            <person name="Nakamura Y."/>
            <person name="Miyajima N."/>
            <person name="Hirosawa M."/>
            <person name="Sugiura M."/>
            <person name="Sasamoto S."/>
            <person name="Kimura T."/>
            <person name="Hosouchi T."/>
            <person name="Matsuno A."/>
            <person name="Muraki A."/>
            <person name="Nakazaki N."/>
            <person name="Naruo K."/>
            <person name="Okumura S."/>
            <person name="Shimpo S."/>
            <person name="Takeuchi C."/>
            <person name="Wada T."/>
            <person name="Watanabe A."/>
            <person name="Yamada M."/>
            <person name="Yasuda M."/>
            <person name="Tabata S."/>
        </authorList>
    </citation>
    <scope>NUCLEOTIDE SEQUENCE [LARGE SCALE GENOMIC DNA]</scope>
    <source>
        <strain>ATCC 27184 / PCC 6803 / Kazusa</strain>
    </source>
</reference>